<comment type="function">
    <text evidence="1">Catalyzes the synthesis of N-((2S)-2-amino-2-carboxyethyl)-L-glutamate (ACEGA) from O-phospho-L-serine and L-glutamate. Involved in the biosynthesis of L-2,3-diaminopropionic acid (L-Dap), a precursor of staphyloferrin B and antibiotics.</text>
</comment>
<comment type="catalytic activity">
    <reaction evidence="1">
        <text>O-phospho-L-serine + L-glutamate = N-[(2S)-2-amino-2-carboxyethyl]-L-glutamate + phosphate + H(+)</text>
        <dbReference type="Rhea" id="RHEA:52384"/>
        <dbReference type="ChEBI" id="CHEBI:15378"/>
        <dbReference type="ChEBI" id="CHEBI:29985"/>
        <dbReference type="ChEBI" id="CHEBI:43474"/>
        <dbReference type="ChEBI" id="CHEBI:57524"/>
        <dbReference type="ChEBI" id="CHEBI:134610"/>
        <dbReference type="EC" id="2.5.1.140"/>
    </reaction>
</comment>
<comment type="cofactor">
    <cofactor evidence="1">
        <name>pyridoxal 5'-phosphate</name>
        <dbReference type="ChEBI" id="CHEBI:597326"/>
    </cofactor>
</comment>
<comment type="pathway">
    <text evidence="1">Siderophore biosynthesis.</text>
</comment>
<comment type="subunit">
    <text evidence="1">Homodimer.</text>
</comment>
<comment type="induction">
    <text evidence="2">Up-regulated under iron-deficient growth conditions. Repressed by Fur under iron-rich growth conditions.</text>
</comment>
<comment type="similarity">
    <text evidence="3">Belongs to the cysteine synthase/cystathionine beta-synthase family. SbnA subfamily.</text>
</comment>
<organism>
    <name type="scientific">Staphylococcus aureus (strain JH9)</name>
    <dbReference type="NCBI Taxonomy" id="359786"/>
    <lineage>
        <taxon>Bacteria</taxon>
        <taxon>Bacillati</taxon>
        <taxon>Bacillota</taxon>
        <taxon>Bacilli</taxon>
        <taxon>Bacillales</taxon>
        <taxon>Staphylococcaceae</taxon>
        <taxon>Staphylococcus</taxon>
    </lineage>
</organism>
<feature type="chain" id="PRO_0000395015" description="N-(2-amino-2-carboxyethyl)-L-glutamate synthase">
    <location>
        <begin position="1"/>
        <end position="326"/>
    </location>
</feature>
<feature type="binding site" evidence="1">
    <location>
        <position position="77"/>
    </location>
    <ligand>
        <name>pyridoxal 5'-phosphate</name>
        <dbReference type="ChEBI" id="CHEBI:597326"/>
    </ligand>
</feature>
<feature type="binding site" evidence="1">
    <location>
        <begin position="185"/>
        <end position="189"/>
    </location>
    <ligand>
        <name>pyridoxal 5'-phosphate</name>
        <dbReference type="ChEBI" id="CHEBI:597326"/>
    </ligand>
</feature>
<feature type="binding site" evidence="1">
    <location>
        <position position="272"/>
    </location>
    <ligand>
        <name>pyridoxal 5'-phosphate</name>
        <dbReference type="ChEBI" id="CHEBI:597326"/>
    </ligand>
</feature>
<feature type="modified residue" description="N6-(pyridoxal phosphate)lysine" evidence="1">
    <location>
        <position position="47"/>
    </location>
</feature>
<protein>
    <recommendedName>
        <fullName evidence="3">N-(2-amino-2-carboxyethyl)-L-glutamate synthase</fullName>
        <shortName evidence="3">ACEGA synthase</shortName>
        <ecNumber evidence="1">2.5.1.140</ecNumber>
    </recommendedName>
</protein>
<name>SBNA_STAA9</name>
<dbReference type="EC" id="2.5.1.140" evidence="1"/>
<dbReference type="EMBL" id="CP000703">
    <property type="protein sequence ID" value="ABQ47910.1"/>
    <property type="molecule type" value="Genomic_DNA"/>
</dbReference>
<dbReference type="RefSeq" id="WP_000570808.1">
    <property type="nucleotide sequence ID" value="NC_009487.1"/>
</dbReference>
<dbReference type="SMR" id="A5INY7"/>
<dbReference type="KEGG" id="saj:SaurJH9_0103"/>
<dbReference type="HOGENOM" id="CLU_021018_1_0_9"/>
<dbReference type="GO" id="GO:0016765">
    <property type="term" value="F:transferase activity, transferring alkyl or aryl (other than methyl) groups"/>
    <property type="evidence" value="ECO:0007669"/>
    <property type="project" value="UniProtKB-ARBA"/>
</dbReference>
<dbReference type="GO" id="GO:0006535">
    <property type="term" value="P:cysteine biosynthetic process from serine"/>
    <property type="evidence" value="ECO:0007669"/>
    <property type="project" value="InterPro"/>
</dbReference>
<dbReference type="CDD" id="cd01561">
    <property type="entry name" value="CBS_like"/>
    <property type="match status" value="1"/>
</dbReference>
<dbReference type="Gene3D" id="3.40.50.1100">
    <property type="match status" value="2"/>
</dbReference>
<dbReference type="InterPro" id="IPR050214">
    <property type="entry name" value="Cys_Synth/Cystath_Beta-Synth"/>
</dbReference>
<dbReference type="InterPro" id="IPR001216">
    <property type="entry name" value="P-phosphate_BS"/>
</dbReference>
<dbReference type="InterPro" id="IPR023927">
    <property type="entry name" value="SbnA"/>
</dbReference>
<dbReference type="InterPro" id="IPR001926">
    <property type="entry name" value="TrpB-like_PALP"/>
</dbReference>
<dbReference type="InterPro" id="IPR036052">
    <property type="entry name" value="TrpB-like_PALP_sf"/>
</dbReference>
<dbReference type="NCBIfam" id="TIGR03945">
    <property type="entry name" value="PLP_SbnA_fam"/>
    <property type="match status" value="1"/>
</dbReference>
<dbReference type="PANTHER" id="PTHR10314">
    <property type="entry name" value="CYSTATHIONINE BETA-SYNTHASE"/>
    <property type="match status" value="1"/>
</dbReference>
<dbReference type="Pfam" id="PF00291">
    <property type="entry name" value="PALP"/>
    <property type="match status" value="1"/>
</dbReference>
<dbReference type="SUPFAM" id="SSF53686">
    <property type="entry name" value="Tryptophan synthase beta subunit-like PLP-dependent enzymes"/>
    <property type="match status" value="1"/>
</dbReference>
<dbReference type="PROSITE" id="PS00901">
    <property type="entry name" value="CYS_SYNTHASE"/>
    <property type="match status" value="1"/>
</dbReference>
<reference key="1">
    <citation type="submission" date="2007-05" db="EMBL/GenBank/DDBJ databases">
        <title>Complete sequence of chromosome of Staphylococcus aureus subsp. aureus JH9.</title>
        <authorList>
            <consortium name="US DOE Joint Genome Institute"/>
            <person name="Copeland A."/>
            <person name="Lucas S."/>
            <person name="Lapidus A."/>
            <person name="Barry K."/>
            <person name="Detter J.C."/>
            <person name="Glavina del Rio T."/>
            <person name="Hammon N."/>
            <person name="Israni S."/>
            <person name="Pitluck S."/>
            <person name="Chain P."/>
            <person name="Malfatti S."/>
            <person name="Shin M."/>
            <person name="Vergez L."/>
            <person name="Schmutz J."/>
            <person name="Larimer F."/>
            <person name="Land M."/>
            <person name="Hauser L."/>
            <person name="Kyrpides N."/>
            <person name="Kim E."/>
            <person name="Tomasz A."/>
            <person name="Richardson P."/>
        </authorList>
    </citation>
    <scope>NUCLEOTIDE SEQUENCE [LARGE SCALE GENOMIC DNA]</scope>
    <source>
        <strain>JH9</strain>
    </source>
</reference>
<proteinExistence type="inferred from homology"/>
<accession>A5INY7</accession>
<sequence length="326" mass="35897">MIEKSQACHDSLLDSVGQTPMVQLHQLFPKHEVFAKLEYMNPGGSMKDRPAKYIIEHGIKHGLITENTHLIESTSGNLGIALAMIAKIKGLKLTCVVDPKISPTNLKIIKSYGANVEMVEEPDAHGGYLMTRIAKVQELLATIDDAYWINQYANELNWQSHYHGAGTEIVETIKQPIDYFVAPVSTTGSIMGMSRKIKEVHPNAQIVAVDAKGSVIFGDKPINRELPGIGASRVPEILNRSEINQVIHVDDYQSALGCRKLIDYEGIFAGGSTGSIIAAIEQLITSIEEGATIVTILPDRGDRYLDLVYSDTWLEKMKSRQGVKSE</sequence>
<evidence type="ECO:0000250" key="1">
    <source>
        <dbReference type="UniProtKB" id="A6QDA0"/>
    </source>
</evidence>
<evidence type="ECO:0000250" key="2">
    <source>
        <dbReference type="UniProtKB" id="Q2G1N3"/>
    </source>
</evidence>
<evidence type="ECO:0000305" key="3"/>
<keyword id="KW-0663">Pyridoxal phosphate</keyword>
<keyword id="KW-0808">Transferase</keyword>
<gene>
    <name type="primary">sbnA</name>
    <name type="ordered locus">SaurJH9_0103</name>
</gene>